<gene>
    <name evidence="1" type="primary">TRM8</name>
    <name type="ordered locus">CNB00250</name>
</gene>
<protein>
    <recommendedName>
        <fullName evidence="1">tRNA (guanine-N(7)-)-methyltransferase</fullName>
        <ecNumber evidence="1">2.1.1.33</ecNumber>
    </recommendedName>
    <alternativeName>
        <fullName evidence="1">Transfer RNA methyltransferase 8</fullName>
    </alternativeName>
    <alternativeName>
        <fullName evidence="1">tRNA (guanine(46)-N(7))-methyltransferase</fullName>
    </alternativeName>
    <alternativeName>
        <fullName evidence="1">tRNA(m7G46)-methyltransferase</fullName>
    </alternativeName>
</protein>
<feature type="chain" id="PRO_0000370594" description="tRNA (guanine-N(7)-)-methyltransferase">
    <location>
        <begin position="1"/>
        <end position="296"/>
    </location>
</feature>
<feature type="region of interest" description="Disordered" evidence="2">
    <location>
        <begin position="1"/>
        <end position="26"/>
    </location>
</feature>
<feature type="active site" evidence="1">
    <location>
        <position position="191"/>
    </location>
</feature>
<feature type="binding site" evidence="1">
    <location>
        <position position="101"/>
    </location>
    <ligand>
        <name>S-adenosyl-L-methionine</name>
        <dbReference type="ChEBI" id="CHEBI:59789"/>
    </ligand>
</feature>
<feature type="binding site" evidence="1">
    <location>
        <begin position="124"/>
        <end position="125"/>
    </location>
    <ligand>
        <name>S-adenosyl-L-methionine</name>
        <dbReference type="ChEBI" id="CHEBI:59789"/>
    </ligand>
</feature>
<feature type="binding site" evidence="1">
    <location>
        <begin position="168"/>
        <end position="169"/>
    </location>
    <ligand>
        <name>S-adenosyl-L-methionine</name>
        <dbReference type="ChEBI" id="CHEBI:59789"/>
    </ligand>
</feature>
<feature type="binding site" evidence="1">
    <location>
        <position position="188"/>
    </location>
    <ligand>
        <name>S-adenosyl-L-methionine</name>
        <dbReference type="ChEBI" id="CHEBI:59789"/>
    </ligand>
</feature>
<feature type="binding site" evidence="1">
    <location>
        <begin position="266"/>
        <end position="268"/>
    </location>
    <ligand>
        <name>S-adenosyl-L-methionine</name>
        <dbReference type="ChEBI" id="CHEBI:59789"/>
    </ligand>
</feature>
<comment type="function">
    <text evidence="1">Catalyzes the formation of N(7)-methylguanine at position 46 (m7G46) in tRNA.</text>
</comment>
<comment type="catalytic activity">
    <reaction evidence="1">
        <text>guanosine(46) in tRNA + S-adenosyl-L-methionine = N(7)-methylguanosine(46) in tRNA + S-adenosyl-L-homocysteine</text>
        <dbReference type="Rhea" id="RHEA:42708"/>
        <dbReference type="Rhea" id="RHEA-COMP:10188"/>
        <dbReference type="Rhea" id="RHEA-COMP:10189"/>
        <dbReference type="ChEBI" id="CHEBI:57856"/>
        <dbReference type="ChEBI" id="CHEBI:59789"/>
        <dbReference type="ChEBI" id="CHEBI:74269"/>
        <dbReference type="ChEBI" id="CHEBI:74480"/>
        <dbReference type="EC" id="2.1.1.33"/>
    </reaction>
</comment>
<comment type="pathway">
    <text evidence="1">tRNA modification; N(7)-methylguanine-tRNA biosynthesis.</text>
</comment>
<comment type="subunit">
    <text evidence="1">Forms a complex with TRM82.</text>
</comment>
<comment type="subcellular location">
    <subcellularLocation>
        <location evidence="1">Nucleus</location>
    </subcellularLocation>
</comment>
<comment type="similarity">
    <text evidence="1">Belongs to the class I-like SAM-binding methyltransferase superfamily. TrmB family.</text>
</comment>
<dbReference type="EC" id="2.1.1.33" evidence="1"/>
<dbReference type="EMBL" id="AE017342">
    <property type="protein sequence ID" value="AAW41459.2"/>
    <property type="molecule type" value="Genomic_DNA"/>
</dbReference>
<dbReference type="RefSeq" id="XP_568766.1">
    <property type="nucleotide sequence ID" value="XM_568766.1"/>
</dbReference>
<dbReference type="SMR" id="P0CS80"/>
<dbReference type="FunCoup" id="P0CS80">
    <property type="interactions" value="231"/>
</dbReference>
<dbReference type="STRING" id="214684.P0CS80"/>
<dbReference type="PaxDb" id="214684-P0CS80"/>
<dbReference type="EnsemblFungi" id="AAW41459">
    <property type="protein sequence ID" value="AAW41459"/>
    <property type="gene ID" value="CNB00250"/>
</dbReference>
<dbReference type="GeneID" id="3256005"/>
<dbReference type="KEGG" id="cne:CNB00250"/>
<dbReference type="eggNOG" id="KOG3115">
    <property type="taxonomic scope" value="Eukaryota"/>
</dbReference>
<dbReference type="HOGENOM" id="CLU_050910_3_1_1"/>
<dbReference type="InParanoid" id="P0CS80"/>
<dbReference type="OrthoDB" id="47276at2759"/>
<dbReference type="UniPathway" id="UPA00989"/>
<dbReference type="Proteomes" id="UP000002149">
    <property type="component" value="Chromosome 2"/>
</dbReference>
<dbReference type="GO" id="GO:0005634">
    <property type="term" value="C:nucleus"/>
    <property type="evidence" value="ECO:0007669"/>
    <property type="project" value="UniProtKB-SubCell"/>
</dbReference>
<dbReference type="GO" id="GO:0106143">
    <property type="term" value="C:tRNA (m7G46) methyltransferase complex"/>
    <property type="evidence" value="ECO:0007669"/>
    <property type="project" value="EnsemblFungi"/>
</dbReference>
<dbReference type="GO" id="GO:0043527">
    <property type="term" value="C:tRNA methyltransferase complex"/>
    <property type="evidence" value="ECO:0000318"/>
    <property type="project" value="GO_Central"/>
</dbReference>
<dbReference type="GO" id="GO:0008176">
    <property type="term" value="F:tRNA (guanine(46)-N7)-methyltransferase activity"/>
    <property type="evidence" value="ECO:0000318"/>
    <property type="project" value="GO_Central"/>
</dbReference>
<dbReference type="GO" id="GO:0000049">
    <property type="term" value="F:tRNA binding"/>
    <property type="evidence" value="ECO:0007669"/>
    <property type="project" value="UniProtKB-UniRule"/>
</dbReference>
<dbReference type="GO" id="GO:0036265">
    <property type="term" value="P:RNA (guanine-N7)-methylation"/>
    <property type="evidence" value="ECO:0000318"/>
    <property type="project" value="GO_Central"/>
</dbReference>
<dbReference type="GO" id="GO:0030488">
    <property type="term" value="P:tRNA methylation"/>
    <property type="evidence" value="ECO:0000318"/>
    <property type="project" value="GO_Central"/>
</dbReference>
<dbReference type="CDD" id="cd02440">
    <property type="entry name" value="AdoMet_MTases"/>
    <property type="match status" value="1"/>
</dbReference>
<dbReference type="FunFam" id="3.40.50.150:FF:000060">
    <property type="entry name" value="tRNA (guanine-N(7)-)-methyltransferase"/>
    <property type="match status" value="1"/>
</dbReference>
<dbReference type="Gene3D" id="3.40.50.150">
    <property type="entry name" value="Vaccinia Virus protein VP39"/>
    <property type="match status" value="1"/>
</dbReference>
<dbReference type="HAMAP" id="MF_03055">
    <property type="entry name" value="tRNA_methyltr_TrmB_euk"/>
    <property type="match status" value="1"/>
</dbReference>
<dbReference type="InterPro" id="IPR029063">
    <property type="entry name" value="SAM-dependent_MTases_sf"/>
</dbReference>
<dbReference type="InterPro" id="IPR025763">
    <property type="entry name" value="Trm8_euk"/>
</dbReference>
<dbReference type="InterPro" id="IPR003358">
    <property type="entry name" value="tRNA_(Gua-N-7)_MeTrfase_Trmb"/>
</dbReference>
<dbReference type="NCBIfam" id="TIGR00091">
    <property type="entry name" value="tRNA (guanosine(46)-N7)-methyltransferase TrmB"/>
    <property type="match status" value="1"/>
</dbReference>
<dbReference type="PANTHER" id="PTHR23417">
    <property type="entry name" value="3-DEOXY-D-MANNO-OCTULOSONIC-ACID TRANSFERASE/TRNA GUANINE-N 7 - -METHYLTRANSFERASE"/>
    <property type="match status" value="1"/>
</dbReference>
<dbReference type="PANTHER" id="PTHR23417:SF16">
    <property type="entry name" value="TRNA (GUANINE-N(7)-)-METHYLTRANSFERASE"/>
    <property type="match status" value="1"/>
</dbReference>
<dbReference type="Pfam" id="PF02390">
    <property type="entry name" value="Methyltransf_4"/>
    <property type="match status" value="1"/>
</dbReference>
<dbReference type="SUPFAM" id="SSF53335">
    <property type="entry name" value="S-adenosyl-L-methionine-dependent methyltransferases"/>
    <property type="match status" value="1"/>
</dbReference>
<dbReference type="PROSITE" id="PS51625">
    <property type="entry name" value="SAM_MT_TRMB"/>
    <property type="match status" value="1"/>
</dbReference>
<organism>
    <name type="scientific">Cryptococcus neoformans var. neoformans serotype D (strain JEC21 / ATCC MYA-565)</name>
    <name type="common">Filobasidiella neoformans</name>
    <dbReference type="NCBI Taxonomy" id="214684"/>
    <lineage>
        <taxon>Eukaryota</taxon>
        <taxon>Fungi</taxon>
        <taxon>Dikarya</taxon>
        <taxon>Basidiomycota</taxon>
        <taxon>Agaricomycotina</taxon>
        <taxon>Tremellomycetes</taxon>
        <taxon>Tremellales</taxon>
        <taxon>Cryptococcaceae</taxon>
        <taxon>Cryptococcus</taxon>
        <taxon>Cryptococcus neoformans species complex</taxon>
    </lineage>
</organism>
<accession>P0CS80</accession>
<accession>Q55X18</accession>
<accession>Q5KMW7</accession>
<name>TRMB_CRYNJ</name>
<proteinExistence type="inferred from homology"/>
<reference key="1">
    <citation type="journal article" date="2005" name="Science">
        <title>The genome of the basidiomycetous yeast and human pathogen Cryptococcus neoformans.</title>
        <authorList>
            <person name="Loftus B.J."/>
            <person name="Fung E."/>
            <person name="Roncaglia P."/>
            <person name="Rowley D."/>
            <person name="Amedeo P."/>
            <person name="Bruno D."/>
            <person name="Vamathevan J."/>
            <person name="Miranda M."/>
            <person name="Anderson I.J."/>
            <person name="Fraser J.A."/>
            <person name="Allen J.E."/>
            <person name="Bosdet I.E."/>
            <person name="Brent M.R."/>
            <person name="Chiu R."/>
            <person name="Doering T.L."/>
            <person name="Donlin M.J."/>
            <person name="D'Souza C.A."/>
            <person name="Fox D.S."/>
            <person name="Grinberg V."/>
            <person name="Fu J."/>
            <person name="Fukushima M."/>
            <person name="Haas B.J."/>
            <person name="Huang J.C."/>
            <person name="Janbon G."/>
            <person name="Jones S.J.M."/>
            <person name="Koo H.L."/>
            <person name="Krzywinski M.I."/>
            <person name="Kwon-Chung K.J."/>
            <person name="Lengeler K.B."/>
            <person name="Maiti R."/>
            <person name="Marra M.A."/>
            <person name="Marra R.E."/>
            <person name="Mathewson C.A."/>
            <person name="Mitchell T.G."/>
            <person name="Pertea M."/>
            <person name="Riggs F.R."/>
            <person name="Salzberg S.L."/>
            <person name="Schein J.E."/>
            <person name="Shvartsbeyn A."/>
            <person name="Shin H."/>
            <person name="Shumway M."/>
            <person name="Specht C.A."/>
            <person name="Suh B.B."/>
            <person name="Tenney A."/>
            <person name="Utterback T.R."/>
            <person name="Wickes B.L."/>
            <person name="Wortman J.R."/>
            <person name="Wye N.H."/>
            <person name="Kronstad J.W."/>
            <person name="Lodge J.K."/>
            <person name="Heitman J."/>
            <person name="Davis R.W."/>
            <person name="Fraser C.M."/>
            <person name="Hyman R.W."/>
        </authorList>
    </citation>
    <scope>NUCLEOTIDE SEQUENCE [LARGE SCALE GENOMIC DNA]</scope>
    <source>
        <strain>JEC21 / ATCC MYA-565</strain>
    </source>
</reference>
<keyword id="KW-0489">Methyltransferase</keyword>
<keyword id="KW-0539">Nucleus</keyword>
<keyword id="KW-1185">Reference proteome</keyword>
<keyword id="KW-0694">RNA-binding</keyword>
<keyword id="KW-0949">S-adenosyl-L-methionine</keyword>
<keyword id="KW-0808">Transferase</keyword>
<keyword id="KW-0819">tRNA processing</keyword>
<keyword id="KW-0820">tRNA-binding</keyword>
<evidence type="ECO:0000255" key="1">
    <source>
        <dbReference type="HAMAP-Rule" id="MF_03055"/>
    </source>
</evidence>
<evidence type="ECO:0000256" key="2">
    <source>
        <dbReference type="SAM" id="MobiDB-lite"/>
    </source>
</evidence>
<sequence>MSKRTREESEMEAGPSTASPGVSVSPAPALTAGEVQLLKVPQKRFYRQRAHANVFIDHELDYPKRPELMDWSTHYPAYFSQPNEDGTITQGEKKVEWADVGCGFGGLLMALAPLFPEKLMLGMEIRTSVTKYVTDRIAATRQAQSLLPADSVDTKPGGYQNVSVIKANSMKHMPNFFAKGQLEKIFFLFPDPHFKNRKHKARIITPALLAEYAYVLRPGGILYTVTDVKDLHEWMAHHLHAHPLFEYIPTETLSDDPILEAARTATEEGQKVERNKGDKWVACFRRKEDPKEEDED</sequence>